<reference key="1">
    <citation type="journal article" date="2005" name="Nature">
        <title>Generation and annotation of the DNA sequences of human chromosomes 2 and 4.</title>
        <authorList>
            <person name="Hillier L.W."/>
            <person name="Graves T.A."/>
            <person name="Fulton R.S."/>
            <person name="Fulton L.A."/>
            <person name="Pepin K.H."/>
            <person name="Minx P."/>
            <person name="Wagner-McPherson C."/>
            <person name="Layman D."/>
            <person name="Wylie K."/>
            <person name="Sekhon M."/>
            <person name="Becker M.C."/>
            <person name="Fewell G.A."/>
            <person name="Delehaunty K.D."/>
            <person name="Miner T.L."/>
            <person name="Nash W.E."/>
            <person name="Kremitzki C."/>
            <person name="Oddy L."/>
            <person name="Du H."/>
            <person name="Sun H."/>
            <person name="Bradshaw-Cordum H."/>
            <person name="Ali J."/>
            <person name="Carter J."/>
            <person name="Cordes M."/>
            <person name="Harris A."/>
            <person name="Isak A."/>
            <person name="van Brunt A."/>
            <person name="Nguyen C."/>
            <person name="Du F."/>
            <person name="Courtney L."/>
            <person name="Kalicki J."/>
            <person name="Ozersky P."/>
            <person name="Abbott S."/>
            <person name="Armstrong J."/>
            <person name="Belter E.A."/>
            <person name="Caruso L."/>
            <person name="Cedroni M."/>
            <person name="Cotton M."/>
            <person name="Davidson T."/>
            <person name="Desai A."/>
            <person name="Elliott G."/>
            <person name="Erb T."/>
            <person name="Fronick C."/>
            <person name="Gaige T."/>
            <person name="Haakenson W."/>
            <person name="Haglund K."/>
            <person name="Holmes A."/>
            <person name="Harkins R."/>
            <person name="Kim K."/>
            <person name="Kruchowski S.S."/>
            <person name="Strong C.M."/>
            <person name="Grewal N."/>
            <person name="Goyea E."/>
            <person name="Hou S."/>
            <person name="Levy A."/>
            <person name="Martinka S."/>
            <person name="Mead K."/>
            <person name="McLellan M.D."/>
            <person name="Meyer R."/>
            <person name="Randall-Maher J."/>
            <person name="Tomlinson C."/>
            <person name="Dauphin-Kohlberg S."/>
            <person name="Kozlowicz-Reilly A."/>
            <person name="Shah N."/>
            <person name="Swearengen-Shahid S."/>
            <person name="Snider J."/>
            <person name="Strong J.T."/>
            <person name="Thompson J."/>
            <person name="Yoakum M."/>
            <person name="Leonard S."/>
            <person name="Pearman C."/>
            <person name="Trani L."/>
            <person name="Radionenko M."/>
            <person name="Waligorski J.E."/>
            <person name="Wang C."/>
            <person name="Rock S.M."/>
            <person name="Tin-Wollam A.-M."/>
            <person name="Maupin R."/>
            <person name="Latreille P."/>
            <person name="Wendl M.C."/>
            <person name="Yang S.-P."/>
            <person name="Pohl C."/>
            <person name="Wallis J.W."/>
            <person name="Spieth J."/>
            <person name="Bieri T.A."/>
            <person name="Berkowicz N."/>
            <person name="Nelson J.O."/>
            <person name="Osborne J."/>
            <person name="Ding L."/>
            <person name="Meyer R."/>
            <person name="Sabo A."/>
            <person name="Shotland Y."/>
            <person name="Sinha P."/>
            <person name="Wohldmann P.E."/>
            <person name="Cook L.L."/>
            <person name="Hickenbotham M.T."/>
            <person name="Eldred J."/>
            <person name="Williams D."/>
            <person name="Jones T.A."/>
            <person name="She X."/>
            <person name="Ciccarelli F.D."/>
            <person name="Izaurralde E."/>
            <person name="Taylor J."/>
            <person name="Schmutz J."/>
            <person name="Myers R.M."/>
            <person name="Cox D.R."/>
            <person name="Huang X."/>
            <person name="McPherson J.D."/>
            <person name="Mardis E.R."/>
            <person name="Clifton S.W."/>
            <person name="Warren W.C."/>
            <person name="Chinwalla A.T."/>
            <person name="Eddy S.R."/>
            <person name="Marra M.A."/>
            <person name="Ovcharenko I."/>
            <person name="Furey T.S."/>
            <person name="Miller W."/>
            <person name="Eichler E.E."/>
            <person name="Bork P."/>
            <person name="Suyama M."/>
            <person name="Torrents D."/>
            <person name="Waterston R.H."/>
            <person name="Wilson R.K."/>
        </authorList>
    </citation>
    <scope>NUCLEOTIDE SEQUENCE [LARGE SCALE GENOMIC DNA]</scope>
</reference>
<protein>
    <recommendedName>
        <fullName evidence="2">Protein FAM240C</fullName>
    </recommendedName>
</protein>
<name>F240C_HUMAN</name>
<gene>
    <name type="primary">FAM240C</name>
</gene>
<accession>A0A1B0GVR7</accession>
<feature type="chain" id="PRO_0000447306" description="Protein FAM240C">
    <location>
        <begin position="1"/>
        <end position="95"/>
    </location>
</feature>
<feature type="region of interest" description="Disordered" evidence="1">
    <location>
        <begin position="68"/>
        <end position="95"/>
    </location>
</feature>
<feature type="compositionally biased region" description="Basic and acidic residues" evidence="1">
    <location>
        <begin position="76"/>
        <end position="95"/>
    </location>
</feature>
<evidence type="ECO:0000256" key="1">
    <source>
        <dbReference type="SAM" id="MobiDB-lite"/>
    </source>
</evidence>
<evidence type="ECO:0000305" key="2"/>
<comment type="similarity">
    <text evidence="2">Belongs to the FAM240 family.</text>
</comment>
<organism>
    <name type="scientific">Homo sapiens</name>
    <name type="common">Human</name>
    <dbReference type="NCBI Taxonomy" id="9606"/>
    <lineage>
        <taxon>Eukaryota</taxon>
        <taxon>Metazoa</taxon>
        <taxon>Chordata</taxon>
        <taxon>Craniata</taxon>
        <taxon>Vertebrata</taxon>
        <taxon>Euteleostomi</taxon>
        <taxon>Mammalia</taxon>
        <taxon>Eutheria</taxon>
        <taxon>Euarchontoglires</taxon>
        <taxon>Primates</taxon>
        <taxon>Haplorrhini</taxon>
        <taxon>Catarrhini</taxon>
        <taxon>Hominidae</taxon>
        <taxon>Homo</taxon>
    </lineage>
</organism>
<sequence>MVGKNMSKSLTLKNPGRVAYDSGGIKMFWEKKIEHHARHLQNEDIRVRRSALNKLRVGWAEQLEGRNKMLQGPGRCPDRVPEATESLHTKDKKAA</sequence>
<proteinExistence type="evidence at protein level"/>
<dbReference type="EMBL" id="AC131097">
    <property type="status" value="NOT_ANNOTATED_CDS"/>
    <property type="molecule type" value="Genomic_DNA"/>
</dbReference>
<dbReference type="CCDS" id="CCDS92996.1"/>
<dbReference type="RefSeq" id="NP_001369297.1">
    <property type="nucleotide sequence ID" value="NM_001382368.1"/>
</dbReference>
<dbReference type="SMR" id="A0A1B0GVR7"/>
<dbReference type="STRING" id="9606.ENSP00000490626"/>
<dbReference type="BioMuta" id="ENSG00000216921"/>
<dbReference type="MassIVE" id="A0A1B0GVR7"/>
<dbReference type="PeptideAtlas" id="A0A1B0GVR7"/>
<dbReference type="Antibodypedia" id="81526">
    <property type="antibodies" value="2 antibodies from 2 providers"/>
</dbReference>
<dbReference type="Ensembl" id="ENST00000404031.6">
    <property type="protein sequence ID" value="ENSP00000490626.1"/>
    <property type="gene ID" value="ENSG00000216921.9"/>
</dbReference>
<dbReference type="GeneID" id="285095"/>
<dbReference type="MANE-Select" id="ENST00000404031.6">
    <property type="protein sequence ID" value="ENSP00000490626.1"/>
    <property type="RefSeq nucleotide sequence ID" value="NM_001382368.1"/>
    <property type="RefSeq protein sequence ID" value="NP_001369297.1"/>
</dbReference>
<dbReference type="AGR" id="HGNC:54200"/>
<dbReference type="GeneCards" id="FAM240C"/>
<dbReference type="HGNC" id="HGNC:54200">
    <property type="gene designation" value="FAM240C"/>
</dbReference>
<dbReference type="HPA" id="ENSG00000216921">
    <property type="expression patterns" value="Tissue enriched (tongue)"/>
</dbReference>
<dbReference type="neXtProt" id="NX_A0A1B0GVR7"/>
<dbReference type="OpenTargets" id="ENSG00000216921"/>
<dbReference type="VEuPathDB" id="HostDB:ENSG00000216921"/>
<dbReference type="GeneTree" id="ENSGT00510000055442"/>
<dbReference type="InParanoid" id="A0A1B0GVR7"/>
<dbReference type="OMA" id="QPSHARD"/>
<dbReference type="PAN-GO" id="A0A1B0GVR7">
    <property type="GO annotations" value="0 GO annotations based on evolutionary models"/>
</dbReference>
<dbReference type="PRO" id="PR:A0A1B0GVR7"/>
<dbReference type="Proteomes" id="UP000005640">
    <property type="component" value="Chromosome 2"/>
</dbReference>
<dbReference type="Bgee" id="ENSG00000216921">
    <property type="expression patterns" value="Expressed in body of pancreas and 92 other cell types or tissues"/>
</dbReference>
<dbReference type="ExpressionAtlas" id="A0A1B0GVR7">
    <property type="expression patterns" value="baseline and differential"/>
</dbReference>
<dbReference type="InterPro" id="IPR040261">
    <property type="entry name" value="FAM240"/>
</dbReference>
<dbReference type="PANTHER" id="PTHR40387">
    <property type="entry name" value="PROTEIN FAM240B"/>
    <property type="match status" value="1"/>
</dbReference>
<dbReference type="PANTHER" id="PTHR40387:SF4">
    <property type="entry name" value="PROTEIN FAM240C"/>
    <property type="match status" value="1"/>
</dbReference>
<keyword id="KW-1267">Proteomics identification</keyword>
<keyword id="KW-1185">Reference proteome</keyword>